<reference key="1">
    <citation type="journal article" date="2001" name="Nature">
        <title>Complete genome sequence of Salmonella enterica serovar Typhimurium LT2.</title>
        <authorList>
            <person name="McClelland M."/>
            <person name="Sanderson K.E."/>
            <person name="Spieth J."/>
            <person name="Clifton S.W."/>
            <person name="Latreille P."/>
            <person name="Courtney L."/>
            <person name="Porwollik S."/>
            <person name="Ali J."/>
            <person name="Dante M."/>
            <person name="Du F."/>
            <person name="Hou S."/>
            <person name="Layman D."/>
            <person name="Leonard S."/>
            <person name="Nguyen C."/>
            <person name="Scott K."/>
            <person name="Holmes A."/>
            <person name="Grewal N."/>
            <person name="Mulvaney E."/>
            <person name="Ryan E."/>
            <person name="Sun H."/>
            <person name="Florea L."/>
            <person name="Miller W."/>
            <person name="Stoneking T."/>
            <person name="Nhan M."/>
            <person name="Waterston R."/>
            <person name="Wilson R.K."/>
        </authorList>
    </citation>
    <scope>NUCLEOTIDE SEQUENCE [LARGE SCALE GENOMIC DNA]</scope>
    <source>
        <strain>LT2 / SGSC1412 / ATCC 700720</strain>
    </source>
</reference>
<comment type="function">
    <text evidence="1">Responsible for synthesis of pseudouridine from uracil-2457 in 23S ribosomal RNA.</text>
</comment>
<comment type="catalytic activity">
    <reaction>
        <text>uridine(2457) in 23S rRNA = pseudouridine(2457) in 23S rRNA</text>
        <dbReference type="Rhea" id="RHEA:38871"/>
        <dbReference type="Rhea" id="RHEA-COMP:10091"/>
        <dbReference type="Rhea" id="RHEA-COMP:10092"/>
        <dbReference type="ChEBI" id="CHEBI:65314"/>
        <dbReference type="ChEBI" id="CHEBI:65315"/>
        <dbReference type="EC" id="5.4.99.20"/>
    </reaction>
</comment>
<comment type="similarity">
    <text evidence="2">Belongs to the pseudouridine synthase RsuA family.</text>
</comment>
<name>RLUE_SALTY</name>
<proteinExistence type="inferred from homology"/>
<gene>
    <name type="primary">rluE</name>
    <name type="ordered locus">STM1237</name>
</gene>
<sequence>MRQLISSENTMQKTSFRNHYVKRFSSRQASKSRKENQPKRVVLFNKPYDVLPQFTDEAGRRTLKDFIPVQGVYAAGRLDRDSEGLLVLTNDGALQARLTQPGKRTGKIYYVQVEGIPDNAALQALRTGVTLNDGPTLPAGIEIVAEPDWLWPRTPPIRERKNIPTSWLKVTLYEGRNRQVRRMTAHVGHPTLRLIRYSMGDYTLNGLDNGQWREIAQEKDR</sequence>
<evidence type="ECO:0000250" key="1"/>
<evidence type="ECO:0000305" key="2"/>
<accession>Q8ZPZ1</accession>
<organism>
    <name type="scientific">Salmonella typhimurium (strain LT2 / SGSC1412 / ATCC 700720)</name>
    <dbReference type="NCBI Taxonomy" id="99287"/>
    <lineage>
        <taxon>Bacteria</taxon>
        <taxon>Pseudomonadati</taxon>
        <taxon>Pseudomonadota</taxon>
        <taxon>Gammaproteobacteria</taxon>
        <taxon>Enterobacterales</taxon>
        <taxon>Enterobacteriaceae</taxon>
        <taxon>Salmonella</taxon>
    </lineage>
</organism>
<dbReference type="EC" id="5.4.99.20"/>
<dbReference type="EMBL" id="AE006468">
    <property type="protein sequence ID" value="AAL20166.1"/>
    <property type="molecule type" value="Genomic_DNA"/>
</dbReference>
<dbReference type="RefSeq" id="WP_001249412.1">
    <property type="nucleotide sequence ID" value="NC_003197.2"/>
</dbReference>
<dbReference type="SMR" id="Q8ZPZ1"/>
<dbReference type="STRING" id="99287.STM1237"/>
<dbReference type="PaxDb" id="99287-STM1237"/>
<dbReference type="KEGG" id="stm:STM1237"/>
<dbReference type="PATRIC" id="fig|99287.12.peg.1308"/>
<dbReference type="HOGENOM" id="CLU_024979_8_0_6"/>
<dbReference type="OMA" id="HPRTYWV"/>
<dbReference type="PhylomeDB" id="Q8ZPZ1"/>
<dbReference type="BioCyc" id="SENT99287:STM1237-MONOMER"/>
<dbReference type="Proteomes" id="UP000001014">
    <property type="component" value="Chromosome"/>
</dbReference>
<dbReference type="GO" id="GO:0160137">
    <property type="term" value="F:23S rRNA pseudouridine(2457) synthase activity"/>
    <property type="evidence" value="ECO:0007669"/>
    <property type="project" value="UniProtKB-EC"/>
</dbReference>
<dbReference type="GO" id="GO:0003723">
    <property type="term" value="F:RNA binding"/>
    <property type="evidence" value="ECO:0007669"/>
    <property type="project" value="InterPro"/>
</dbReference>
<dbReference type="GO" id="GO:0001522">
    <property type="term" value="P:pseudouridine synthesis"/>
    <property type="evidence" value="ECO:0007669"/>
    <property type="project" value="InterPro"/>
</dbReference>
<dbReference type="GO" id="GO:0006364">
    <property type="term" value="P:rRNA processing"/>
    <property type="evidence" value="ECO:0007669"/>
    <property type="project" value="UniProtKB-KW"/>
</dbReference>
<dbReference type="CDD" id="cd02566">
    <property type="entry name" value="PseudoU_synth_RluE"/>
    <property type="match status" value="1"/>
</dbReference>
<dbReference type="FunFam" id="3.30.70.1560:FF:000003">
    <property type="entry name" value="Pseudouridine synthase"/>
    <property type="match status" value="1"/>
</dbReference>
<dbReference type="FunFam" id="3.30.70.580:FF:000010">
    <property type="entry name" value="Pseudouridine synthase"/>
    <property type="match status" value="1"/>
</dbReference>
<dbReference type="Gene3D" id="3.30.70.1560">
    <property type="entry name" value="Alpha-L RNA-binding motif"/>
    <property type="match status" value="1"/>
</dbReference>
<dbReference type="Gene3D" id="3.30.70.580">
    <property type="entry name" value="Pseudouridine synthase I, catalytic domain, N-terminal subdomain"/>
    <property type="match status" value="1"/>
</dbReference>
<dbReference type="InterPro" id="IPR042092">
    <property type="entry name" value="PsdUridine_s_RsuA/RluB/E/F_cat"/>
</dbReference>
<dbReference type="InterPro" id="IPR020103">
    <property type="entry name" value="PsdUridine_synth_cat_dom_sf"/>
</dbReference>
<dbReference type="InterPro" id="IPR006145">
    <property type="entry name" value="PsdUridine_synth_RsuA/RluA"/>
</dbReference>
<dbReference type="InterPro" id="IPR000748">
    <property type="entry name" value="PsdUridine_synth_RsuA/RluB/E/F"/>
</dbReference>
<dbReference type="InterPro" id="IPR018496">
    <property type="entry name" value="PsdUridine_synth_RsuA/RluB_CS"/>
</dbReference>
<dbReference type="InterPro" id="IPR050343">
    <property type="entry name" value="RsuA_PseudoU_synthase"/>
</dbReference>
<dbReference type="InterPro" id="IPR020094">
    <property type="entry name" value="TruA/RsuA/RluB/E/F_N"/>
</dbReference>
<dbReference type="NCBIfam" id="NF008487">
    <property type="entry name" value="PRK11394.1"/>
    <property type="match status" value="1"/>
</dbReference>
<dbReference type="NCBIfam" id="TIGR00093">
    <property type="entry name" value="pseudouridine synthase"/>
    <property type="match status" value="1"/>
</dbReference>
<dbReference type="PANTHER" id="PTHR47683">
    <property type="entry name" value="PSEUDOURIDINE SYNTHASE FAMILY PROTEIN-RELATED"/>
    <property type="match status" value="1"/>
</dbReference>
<dbReference type="PANTHER" id="PTHR47683:SF2">
    <property type="entry name" value="RNA-BINDING S4 DOMAIN-CONTAINING PROTEIN"/>
    <property type="match status" value="1"/>
</dbReference>
<dbReference type="Pfam" id="PF00849">
    <property type="entry name" value="PseudoU_synth_2"/>
    <property type="match status" value="1"/>
</dbReference>
<dbReference type="SUPFAM" id="SSF55120">
    <property type="entry name" value="Pseudouridine synthase"/>
    <property type="match status" value="1"/>
</dbReference>
<dbReference type="PROSITE" id="PS01149">
    <property type="entry name" value="PSI_RSU"/>
    <property type="match status" value="1"/>
</dbReference>
<keyword id="KW-0413">Isomerase</keyword>
<keyword id="KW-1185">Reference proteome</keyword>
<keyword id="KW-0698">rRNA processing</keyword>
<protein>
    <recommendedName>
        <fullName>Ribosomal large subunit pseudouridine synthase E</fullName>
        <ecNumber>5.4.99.20</ecNumber>
    </recommendedName>
    <alternativeName>
        <fullName>rRNA pseudouridylate synthase E</fullName>
    </alternativeName>
    <alternativeName>
        <fullName>rRNA-uridine isomerase E</fullName>
    </alternativeName>
</protein>
<feature type="chain" id="PRO_0000100008" description="Ribosomal large subunit pseudouridine synthase E">
    <location>
        <begin position="1"/>
        <end position="221"/>
    </location>
</feature>
<feature type="active site" description="Nucleophile" evidence="1">
    <location>
        <position position="79"/>
    </location>
</feature>